<gene>
    <name evidence="1" type="primary">arnC</name>
    <name type="ordered locus">KPK_0267</name>
</gene>
<accession>B5XTK8</accession>
<evidence type="ECO:0000255" key="1">
    <source>
        <dbReference type="HAMAP-Rule" id="MF_01164"/>
    </source>
</evidence>
<protein>
    <recommendedName>
        <fullName evidence="1">Undecaprenyl-phosphate 4-deoxy-4-formamido-L-arabinose transferase</fullName>
        <ecNumber evidence="1">2.4.2.53</ecNumber>
    </recommendedName>
    <alternativeName>
        <fullName evidence="1">Undecaprenyl-phosphate Ara4FN transferase</fullName>
        <shortName evidence="1">Ara4FN transferase</shortName>
    </alternativeName>
</protein>
<feature type="chain" id="PRO_1000137916" description="Undecaprenyl-phosphate 4-deoxy-4-formamido-L-arabinose transferase">
    <location>
        <begin position="1"/>
        <end position="327"/>
    </location>
</feature>
<feature type="transmembrane region" description="Helical" evidence="1">
    <location>
        <begin position="236"/>
        <end position="256"/>
    </location>
</feature>
<feature type="transmembrane region" description="Helical" evidence="1">
    <location>
        <begin position="270"/>
        <end position="290"/>
    </location>
</feature>
<reference key="1">
    <citation type="journal article" date="2008" name="PLoS Genet.">
        <title>Complete genome sequence of the N2-fixing broad host range endophyte Klebsiella pneumoniae 342 and virulence predictions verified in mice.</title>
        <authorList>
            <person name="Fouts D.E."/>
            <person name="Tyler H.L."/>
            <person name="DeBoy R.T."/>
            <person name="Daugherty S."/>
            <person name="Ren Q."/>
            <person name="Badger J.H."/>
            <person name="Durkin A.S."/>
            <person name="Huot H."/>
            <person name="Shrivastava S."/>
            <person name="Kothari S."/>
            <person name="Dodson R.J."/>
            <person name="Mohamoud Y."/>
            <person name="Khouri H."/>
            <person name="Roesch L.F.W."/>
            <person name="Krogfelt K.A."/>
            <person name="Struve C."/>
            <person name="Triplett E.W."/>
            <person name="Methe B.A."/>
        </authorList>
    </citation>
    <scope>NUCLEOTIDE SEQUENCE [LARGE SCALE GENOMIC DNA]</scope>
    <source>
        <strain>342</strain>
    </source>
</reference>
<comment type="function">
    <text evidence="1">Catalyzes the transfer of 4-deoxy-4-formamido-L-arabinose from UDP to undecaprenyl phosphate. The modified arabinose is attached to lipid A and is required for resistance to polymyxin and cationic antimicrobial peptides.</text>
</comment>
<comment type="catalytic activity">
    <reaction evidence="1">
        <text>UDP-4-deoxy-4-formamido-beta-L-arabinose + di-trans,octa-cis-undecaprenyl phosphate = 4-deoxy-4-formamido-alpha-L-arabinopyranosyl di-trans,octa-cis-undecaprenyl phosphate + UDP</text>
        <dbReference type="Rhea" id="RHEA:27722"/>
        <dbReference type="ChEBI" id="CHEBI:58223"/>
        <dbReference type="ChEBI" id="CHEBI:58709"/>
        <dbReference type="ChEBI" id="CHEBI:58909"/>
        <dbReference type="ChEBI" id="CHEBI:60392"/>
        <dbReference type="EC" id="2.4.2.53"/>
    </reaction>
</comment>
<comment type="pathway">
    <text evidence="1">Glycolipid biosynthesis; 4-amino-4-deoxy-alpha-L-arabinose undecaprenyl phosphate biosynthesis; 4-amino-4-deoxy-alpha-L-arabinose undecaprenyl phosphate from UDP-4-deoxy-4-formamido-beta-L-arabinose and undecaprenyl phosphate: step 1/2.</text>
</comment>
<comment type="pathway">
    <text evidence="1">Bacterial outer membrane biogenesis; lipopolysaccharide biosynthesis.</text>
</comment>
<comment type="subcellular location">
    <subcellularLocation>
        <location evidence="1">Cell inner membrane</location>
        <topology evidence="1">Multi-pass membrane protein</topology>
    </subcellularLocation>
</comment>
<comment type="similarity">
    <text evidence="1">Belongs to the glycosyltransferase 2 family.</text>
</comment>
<proteinExistence type="inferred from homology"/>
<sequence length="327" mass="36782">MLTYPPVKKVSVVIPVYNEQDSLPELLRRTDTACATLGRQYEILLIDDGSSDDSARMLTEAAEAEGSHVVAVLLNRNYGQHSAIMAGFSHVTGDLIITLDADLQNPPEEIPRLVEKADEGYDVVGTVRQNRQDSIFRKSASKMINRLIQRTTGKAMGDYGCMLRAYRRHIIDAMLNCHERSTFIPILANTFARRAVEIPVMHAEREFGDSKYSFMRLINLMYDLVTCLTTTPLRLLSIFGSVIALLGFAFGLLLVVLRLAFGPQWAAEGVFMLFAVLFMFIGAQFIGMGLLGEYIGRIYNDVRARPRYFIQRVVRQPETASKEEDRS</sequence>
<dbReference type="EC" id="2.4.2.53" evidence="1"/>
<dbReference type="EMBL" id="CP000964">
    <property type="protein sequence ID" value="ACI11621.1"/>
    <property type="molecule type" value="Genomic_DNA"/>
</dbReference>
<dbReference type="SMR" id="B5XTK8"/>
<dbReference type="CAZy" id="GT2">
    <property type="family name" value="Glycosyltransferase Family 2"/>
</dbReference>
<dbReference type="KEGG" id="kpe:KPK_0267"/>
<dbReference type="HOGENOM" id="CLU_033536_0_0_6"/>
<dbReference type="UniPathway" id="UPA00030"/>
<dbReference type="UniPathway" id="UPA00036">
    <property type="reaction ID" value="UER00495"/>
</dbReference>
<dbReference type="Proteomes" id="UP000001734">
    <property type="component" value="Chromosome"/>
</dbReference>
<dbReference type="GO" id="GO:0005886">
    <property type="term" value="C:plasma membrane"/>
    <property type="evidence" value="ECO:0007669"/>
    <property type="project" value="UniProtKB-SubCell"/>
</dbReference>
<dbReference type="GO" id="GO:0016780">
    <property type="term" value="F:phosphotransferase activity, for other substituted phosphate groups"/>
    <property type="evidence" value="ECO:0007669"/>
    <property type="project" value="UniProtKB-UniRule"/>
</dbReference>
<dbReference type="GO" id="GO:0099621">
    <property type="term" value="F:undecaprenyl-phosphate 4-deoxy-4-formamido-L-arabinose transferase activity"/>
    <property type="evidence" value="ECO:0007669"/>
    <property type="project" value="UniProtKB-EC"/>
</dbReference>
<dbReference type="GO" id="GO:0036108">
    <property type="term" value="P:4-amino-4-deoxy-alpha-L-arabinopyranosyl undecaprenyl phosphate biosynthetic process"/>
    <property type="evidence" value="ECO:0007669"/>
    <property type="project" value="UniProtKB-UniRule"/>
</dbReference>
<dbReference type="GO" id="GO:0009245">
    <property type="term" value="P:lipid A biosynthetic process"/>
    <property type="evidence" value="ECO:0007669"/>
    <property type="project" value="UniProtKB-UniRule"/>
</dbReference>
<dbReference type="GO" id="GO:0009103">
    <property type="term" value="P:lipopolysaccharide biosynthetic process"/>
    <property type="evidence" value="ECO:0007669"/>
    <property type="project" value="UniProtKB-UniRule"/>
</dbReference>
<dbReference type="GO" id="GO:0046677">
    <property type="term" value="P:response to antibiotic"/>
    <property type="evidence" value="ECO:0007669"/>
    <property type="project" value="UniProtKB-KW"/>
</dbReference>
<dbReference type="CDD" id="cd04187">
    <property type="entry name" value="DPM1_like_bac"/>
    <property type="match status" value="1"/>
</dbReference>
<dbReference type="FunFam" id="3.90.550.10:FF:000019">
    <property type="entry name" value="Undecaprenyl-phosphate 4-deoxy-4-formamido-L-arabinose transferase"/>
    <property type="match status" value="1"/>
</dbReference>
<dbReference type="Gene3D" id="3.90.550.10">
    <property type="entry name" value="Spore Coat Polysaccharide Biosynthesis Protein SpsA, Chain A"/>
    <property type="match status" value="1"/>
</dbReference>
<dbReference type="HAMAP" id="MF_01164">
    <property type="entry name" value="ArnC_transfer"/>
    <property type="match status" value="1"/>
</dbReference>
<dbReference type="InterPro" id="IPR022857">
    <property type="entry name" value="ArnC_tfrase"/>
</dbReference>
<dbReference type="InterPro" id="IPR001173">
    <property type="entry name" value="Glyco_trans_2-like"/>
</dbReference>
<dbReference type="InterPro" id="IPR050256">
    <property type="entry name" value="Glycosyltransferase_2"/>
</dbReference>
<dbReference type="InterPro" id="IPR029044">
    <property type="entry name" value="Nucleotide-diphossugar_trans"/>
</dbReference>
<dbReference type="NCBIfam" id="NF007986">
    <property type="entry name" value="PRK10714.1"/>
    <property type="match status" value="1"/>
</dbReference>
<dbReference type="PANTHER" id="PTHR48090:SF3">
    <property type="entry name" value="UNDECAPRENYL-PHOSPHATE 4-DEOXY-4-FORMAMIDO-L-ARABINOSE TRANSFERASE"/>
    <property type="match status" value="1"/>
</dbReference>
<dbReference type="PANTHER" id="PTHR48090">
    <property type="entry name" value="UNDECAPRENYL-PHOSPHATE 4-DEOXY-4-FORMAMIDO-L-ARABINOSE TRANSFERASE-RELATED"/>
    <property type="match status" value="1"/>
</dbReference>
<dbReference type="Pfam" id="PF00535">
    <property type="entry name" value="Glycos_transf_2"/>
    <property type="match status" value="1"/>
</dbReference>
<dbReference type="SUPFAM" id="SSF53448">
    <property type="entry name" value="Nucleotide-diphospho-sugar transferases"/>
    <property type="match status" value="1"/>
</dbReference>
<organism>
    <name type="scientific">Klebsiella pneumoniae (strain 342)</name>
    <dbReference type="NCBI Taxonomy" id="507522"/>
    <lineage>
        <taxon>Bacteria</taxon>
        <taxon>Pseudomonadati</taxon>
        <taxon>Pseudomonadota</taxon>
        <taxon>Gammaproteobacteria</taxon>
        <taxon>Enterobacterales</taxon>
        <taxon>Enterobacteriaceae</taxon>
        <taxon>Klebsiella/Raoultella group</taxon>
        <taxon>Klebsiella</taxon>
        <taxon>Klebsiella pneumoniae complex</taxon>
    </lineage>
</organism>
<name>ARNC_KLEP3</name>
<keyword id="KW-0046">Antibiotic resistance</keyword>
<keyword id="KW-0997">Cell inner membrane</keyword>
<keyword id="KW-1003">Cell membrane</keyword>
<keyword id="KW-0328">Glycosyltransferase</keyword>
<keyword id="KW-0441">Lipid A biosynthesis</keyword>
<keyword id="KW-0444">Lipid biosynthesis</keyword>
<keyword id="KW-0443">Lipid metabolism</keyword>
<keyword id="KW-0448">Lipopolysaccharide biosynthesis</keyword>
<keyword id="KW-0472">Membrane</keyword>
<keyword id="KW-0808">Transferase</keyword>
<keyword id="KW-0812">Transmembrane</keyword>
<keyword id="KW-1133">Transmembrane helix</keyword>